<keyword id="KW-0249">Electron transport</keyword>
<keyword id="KW-0349">Heme</keyword>
<keyword id="KW-0408">Iron</keyword>
<keyword id="KW-0472">Membrane</keyword>
<keyword id="KW-0479">Metal-binding</keyword>
<keyword id="KW-0496">Mitochondrion</keyword>
<keyword id="KW-0999">Mitochondrion inner membrane</keyword>
<keyword id="KW-0679">Respiratory chain</keyword>
<keyword id="KW-0812">Transmembrane</keyword>
<keyword id="KW-1133">Transmembrane helix</keyword>
<keyword id="KW-0813">Transport</keyword>
<keyword id="KW-0830">Ubiquinone</keyword>
<evidence type="ECO:0000250" key="1"/>
<evidence type="ECO:0000250" key="2">
    <source>
        <dbReference type="UniProtKB" id="P00157"/>
    </source>
</evidence>
<evidence type="ECO:0000255" key="3">
    <source>
        <dbReference type="PROSITE-ProRule" id="PRU00967"/>
    </source>
</evidence>
<evidence type="ECO:0000255" key="4">
    <source>
        <dbReference type="PROSITE-ProRule" id="PRU00968"/>
    </source>
</evidence>
<name>CYB_GALDE</name>
<gene>
    <name type="primary">MT-CYB</name>
    <name type="synonym">COB</name>
    <name type="synonym">CYTB</name>
    <name type="synonym">MTCYB</name>
</gene>
<protein>
    <recommendedName>
        <fullName>Cytochrome b</fullName>
    </recommendedName>
    <alternativeName>
        <fullName>Complex III subunit 3</fullName>
    </alternativeName>
    <alternativeName>
        <fullName>Complex III subunit III</fullName>
    </alternativeName>
    <alternativeName>
        <fullName>Cytochrome b-c1 complex subunit 3</fullName>
    </alternativeName>
    <alternativeName>
        <fullName>Ubiquinol-cytochrome-c reductase complex cytochrome b subunit</fullName>
    </alternativeName>
</protein>
<reference key="1">
    <citation type="submission" date="2003-10" db="EMBL/GenBank/DDBJ databases">
        <title>61 primate SINEs and the evolution of strepsirrhines.</title>
        <authorList>
            <person name="Roos C."/>
            <person name="Schmitz J."/>
            <person name="Zischler H."/>
        </authorList>
    </citation>
    <scope>NUCLEOTIDE SEQUENCE [GENOMIC DNA]</scope>
</reference>
<geneLocation type="mitochondrion"/>
<comment type="function">
    <text evidence="2">Component of the ubiquinol-cytochrome c reductase complex (complex III or cytochrome b-c1 complex) that is part of the mitochondrial respiratory chain. The b-c1 complex mediates electron transfer from ubiquinol to cytochrome c. Contributes to the generation of a proton gradient across the mitochondrial membrane that is then used for ATP synthesis.</text>
</comment>
<comment type="cofactor">
    <cofactor evidence="2">
        <name>heme b</name>
        <dbReference type="ChEBI" id="CHEBI:60344"/>
    </cofactor>
    <text evidence="2">Binds 2 heme b groups non-covalently.</text>
</comment>
<comment type="subunit">
    <text evidence="2">The cytochrome bc1 complex contains 11 subunits: 3 respiratory subunits (MT-CYB, CYC1 and UQCRFS1), 2 core proteins (UQCRC1 and UQCRC2) and 6 low-molecular weight proteins (UQCRH/QCR6, UQCRB/QCR7, UQCRQ/QCR8, UQCR10/QCR9, UQCR11/QCR10 and a cleavage product of UQCRFS1). This cytochrome bc1 complex then forms a dimer.</text>
</comment>
<comment type="subcellular location">
    <subcellularLocation>
        <location evidence="2">Mitochondrion inner membrane</location>
        <topology evidence="2">Multi-pass membrane protein</topology>
    </subcellularLocation>
</comment>
<comment type="miscellaneous">
    <text evidence="1">Heme 1 (or BL or b562) is low-potential and absorbs at about 562 nm, and heme 2 (or BH or b566) is high-potential and absorbs at about 566 nm.</text>
</comment>
<comment type="similarity">
    <text evidence="3 4">Belongs to the cytochrome b family.</text>
</comment>
<comment type="caution">
    <text evidence="2">The full-length protein contains only eight transmembrane helices, not nine as predicted by bioinformatics tools.</text>
</comment>
<dbReference type="EMBL" id="AY441472">
    <property type="protein sequence ID" value="AAS00153.1"/>
    <property type="molecule type" value="Genomic_DNA"/>
</dbReference>
<dbReference type="SMR" id="Q5VJ41"/>
<dbReference type="GO" id="GO:0005743">
    <property type="term" value="C:mitochondrial inner membrane"/>
    <property type="evidence" value="ECO:0007669"/>
    <property type="project" value="UniProtKB-SubCell"/>
</dbReference>
<dbReference type="GO" id="GO:0045275">
    <property type="term" value="C:respiratory chain complex III"/>
    <property type="evidence" value="ECO:0007669"/>
    <property type="project" value="InterPro"/>
</dbReference>
<dbReference type="GO" id="GO:0046872">
    <property type="term" value="F:metal ion binding"/>
    <property type="evidence" value="ECO:0007669"/>
    <property type="project" value="UniProtKB-KW"/>
</dbReference>
<dbReference type="GO" id="GO:0008121">
    <property type="term" value="F:ubiquinol-cytochrome-c reductase activity"/>
    <property type="evidence" value="ECO:0007669"/>
    <property type="project" value="InterPro"/>
</dbReference>
<dbReference type="GO" id="GO:0006122">
    <property type="term" value="P:mitochondrial electron transport, ubiquinol to cytochrome c"/>
    <property type="evidence" value="ECO:0007669"/>
    <property type="project" value="TreeGrafter"/>
</dbReference>
<dbReference type="CDD" id="cd00290">
    <property type="entry name" value="cytochrome_b_C"/>
    <property type="match status" value="1"/>
</dbReference>
<dbReference type="CDD" id="cd00284">
    <property type="entry name" value="Cytochrome_b_N"/>
    <property type="match status" value="1"/>
</dbReference>
<dbReference type="FunFam" id="1.20.810.10:FF:000002">
    <property type="entry name" value="Cytochrome b"/>
    <property type="match status" value="1"/>
</dbReference>
<dbReference type="Gene3D" id="1.20.810.10">
    <property type="entry name" value="Cytochrome Bc1 Complex, Chain C"/>
    <property type="match status" value="1"/>
</dbReference>
<dbReference type="InterPro" id="IPR005798">
    <property type="entry name" value="Cyt_b/b6_C"/>
</dbReference>
<dbReference type="InterPro" id="IPR036150">
    <property type="entry name" value="Cyt_b/b6_C_sf"/>
</dbReference>
<dbReference type="InterPro" id="IPR005797">
    <property type="entry name" value="Cyt_b/b6_N"/>
</dbReference>
<dbReference type="InterPro" id="IPR027387">
    <property type="entry name" value="Cytb/b6-like_sf"/>
</dbReference>
<dbReference type="InterPro" id="IPR030689">
    <property type="entry name" value="Cytochrome_b"/>
</dbReference>
<dbReference type="InterPro" id="IPR048260">
    <property type="entry name" value="Cytochrome_b_C_euk/bac"/>
</dbReference>
<dbReference type="InterPro" id="IPR048259">
    <property type="entry name" value="Cytochrome_b_N_euk/bac"/>
</dbReference>
<dbReference type="InterPro" id="IPR016174">
    <property type="entry name" value="Di-haem_cyt_TM"/>
</dbReference>
<dbReference type="PANTHER" id="PTHR19271">
    <property type="entry name" value="CYTOCHROME B"/>
    <property type="match status" value="1"/>
</dbReference>
<dbReference type="PANTHER" id="PTHR19271:SF16">
    <property type="entry name" value="CYTOCHROME B"/>
    <property type="match status" value="1"/>
</dbReference>
<dbReference type="Pfam" id="PF00032">
    <property type="entry name" value="Cytochrom_B_C"/>
    <property type="match status" value="1"/>
</dbReference>
<dbReference type="Pfam" id="PF00033">
    <property type="entry name" value="Cytochrome_B"/>
    <property type="match status" value="1"/>
</dbReference>
<dbReference type="PIRSF" id="PIRSF038885">
    <property type="entry name" value="COB"/>
    <property type="match status" value="1"/>
</dbReference>
<dbReference type="SUPFAM" id="SSF81648">
    <property type="entry name" value="a domain/subunit of cytochrome bc1 complex (Ubiquinol-cytochrome c reductase)"/>
    <property type="match status" value="1"/>
</dbReference>
<dbReference type="SUPFAM" id="SSF81342">
    <property type="entry name" value="Transmembrane di-heme cytochromes"/>
    <property type="match status" value="1"/>
</dbReference>
<dbReference type="PROSITE" id="PS51003">
    <property type="entry name" value="CYTB_CTER"/>
    <property type="match status" value="1"/>
</dbReference>
<dbReference type="PROSITE" id="PS51002">
    <property type="entry name" value="CYTB_NTER"/>
    <property type="match status" value="1"/>
</dbReference>
<proteinExistence type="inferred from homology"/>
<accession>Q5VJ41</accession>
<sequence>MTNTRKQHPLAKIINHSFIDLPAPSNITAWWNFGSLLGLCLTVQIITGLFLAMHYTSDTTTAFSSVTHICRDVNYGWIIRYLHANGASMFFMCLFAHIGRGLYYGSFTFLETWNIGIALLLAVMATAFMGYVLPWGQMSFWGATAITNLLSAIPYMGPTLVEWIWGGFSVDKATLTRFFAFHFILPFIITAMVMIHLLFLHETGSNNPSGLPSDSDKIPFHPYYMIKDLLGLIILLLTLFSLVMFSPDLLGDPDNYTPANPLNTPPHIKPEWYFLFAYAILRSIPNKLGGVLALLSSILILALIPFMHTAKQRSMMFRPLSQCLYWMLVADLLILTWIGGQPVENPFIMIGQVASITYFFIILILMPLTNTLENKLLKW</sequence>
<feature type="chain" id="PRO_0000060983" description="Cytochrome b">
    <location>
        <begin position="1"/>
        <end position="379"/>
    </location>
</feature>
<feature type="transmembrane region" description="Helical" evidence="2">
    <location>
        <begin position="33"/>
        <end position="53"/>
    </location>
</feature>
<feature type="transmembrane region" description="Helical" evidence="2">
    <location>
        <begin position="77"/>
        <end position="98"/>
    </location>
</feature>
<feature type="transmembrane region" description="Helical" evidence="2">
    <location>
        <begin position="113"/>
        <end position="133"/>
    </location>
</feature>
<feature type="transmembrane region" description="Helical" evidence="2">
    <location>
        <begin position="178"/>
        <end position="198"/>
    </location>
</feature>
<feature type="transmembrane region" description="Helical" evidence="2">
    <location>
        <begin position="226"/>
        <end position="246"/>
    </location>
</feature>
<feature type="transmembrane region" description="Helical" evidence="2">
    <location>
        <begin position="288"/>
        <end position="308"/>
    </location>
</feature>
<feature type="transmembrane region" description="Helical" evidence="2">
    <location>
        <begin position="320"/>
        <end position="340"/>
    </location>
</feature>
<feature type="transmembrane region" description="Helical" evidence="2">
    <location>
        <begin position="347"/>
        <end position="367"/>
    </location>
</feature>
<feature type="binding site" description="axial binding residue" evidence="2">
    <location>
        <position position="83"/>
    </location>
    <ligand>
        <name>heme b</name>
        <dbReference type="ChEBI" id="CHEBI:60344"/>
        <label>b562</label>
    </ligand>
    <ligandPart>
        <name>Fe</name>
        <dbReference type="ChEBI" id="CHEBI:18248"/>
    </ligandPart>
</feature>
<feature type="binding site" description="axial binding residue" evidence="2">
    <location>
        <position position="97"/>
    </location>
    <ligand>
        <name>heme b</name>
        <dbReference type="ChEBI" id="CHEBI:60344"/>
        <label>b566</label>
    </ligand>
    <ligandPart>
        <name>Fe</name>
        <dbReference type="ChEBI" id="CHEBI:18248"/>
    </ligandPart>
</feature>
<feature type="binding site" description="axial binding residue" evidence="2">
    <location>
        <position position="182"/>
    </location>
    <ligand>
        <name>heme b</name>
        <dbReference type="ChEBI" id="CHEBI:60344"/>
        <label>b562</label>
    </ligand>
    <ligandPart>
        <name>Fe</name>
        <dbReference type="ChEBI" id="CHEBI:18248"/>
    </ligandPart>
</feature>
<feature type="binding site" description="axial binding residue" evidence="2">
    <location>
        <position position="196"/>
    </location>
    <ligand>
        <name>heme b</name>
        <dbReference type="ChEBI" id="CHEBI:60344"/>
        <label>b566</label>
    </ligand>
    <ligandPart>
        <name>Fe</name>
        <dbReference type="ChEBI" id="CHEBI:18248"/>
    </ligandPart>
</feature>
<feature type="binding site" evidence="2">
    <location>
        <position position="201"/>
    </location>
    <ligand>
        <name>a ubiquinone</name>
        <dbReference type="ChEBI" id="CHEBI:16389"/>
    </ligand>
</feature>
<organism>
    <name type="scientific">Galagoides demidoff</name>
    <name type="common">Prince Demidoff's bushbaby</name>
    <name type="synonym">Galago demidoff</name>
    <dbReference type="NCBI Taxonomy" id="89672"/>
    <lineage>
        <taxon>Eukaryota</taxon>
        <taxon>Metazoa</taxon>
        <taxon>Chordata</taxon>
        <taxon>Craniata</taxon>
        <taxon>Vertebrata</taxon>
        <taxon>Euteleostomi</taxon>
        <taxon>Mammalia</taxon>
        <taxon>Eutheria</taxon>
        <taxon>Euarchontoglires</taxon>
        <taxon>Primates</taxon>
        <taxon>Strepsirrhini</taxon>
        <taxon>Lorisiformes</taxon>
        <taxon>Galagidae</taxon>
        <taxon>Galagoides</taxon>
    </lineage>
</organism>